<accession>A0A7G9U7M0</accession>
<accession>A0A5B8NBP6</accession>
<dbReference type="EC" id="1.14.14.-" evidence="1"/>
<dbReference type="EMBL" id="MN747925">
    <property type="protein sequence ID" value="QNN89101.1"/>
    <property type="molecule type" value="mRNA"/>
</dbReference>
<dbReference type="EMBL" id="MK803272">
    <property type="protein sequence ID" value="QDZ36315.1"/>
    <property type="molecule type" value="mRNA"/>
</dbReference>
<dbReference type="SMR" id="A0A7G9U7M0"/>
<dbReference type="UniPathway" id="UPA00213"/>
<dbReference type="GO" id="GO:0016020">
    <property type="term" value="C:membrane"/>
    <property type="evidence" value="ECO:0007669"/>
    <property type="project" value="UniProtKB-SubCell"/>
</dbReference>
<dbReference type="GO" id="GO:0020037">
    <property type="term" value="F:heme binding"/>
    <property type="evidence" value="ECO:0007669"/>
    <property type="project" value="InterPro"/>
</dbReference>
<dbReference type="GO" id="GO:0005506">
    <property type="term" value="F:iron ion binding"/>
    <property type="evidence" value="ECO:0007669"/>
    <property type="project" value="InterPro"/>
</dbReference>
<dbReference type="GO" id="GO:0004497">
    <property type="term" value="F:monooxygenase activity"/>
    <property type="evidence" value="ECO:0007669"/>
    <property type="project" value="UniProtKB-KW"/>
</dbReference>
<dbReference type="GO" id="GO:0016705">
    <property type="term" value="F:oxidoreductase activity, acting on paired donors, with incorporation or reduction of molecular oxygen"/>
    <property type="evidence" value="ECO:0007669"/>
    <property type="project" value="InterPro"/>
</dbReference>
<dbReference type="CDD" id="cd11072">
    <property type="entry name" value="CYP71-like"/>
    <property type="match status" value="1"/>
</dbReference>
<dbReference type="FunFam" id="1.10.630.10:FF:000043">
    <property type="entry name" value="Cytochrome P450 99A2"/>
    <property type="match status" value="1"/>
</dbReference>
<dbReference type="Gene3D" id="1.10.630.10">
    <property type="entry name" value="Cytochrome P450"/>
    <property type="match status" value="1"/>
</dbReference>
<dbReference type="InterPro" id="IPR001128">
    <property type="entry name" value="Cyt_P450"/>
</dbReference>
<dbReference type="InterPro" id="IPR017972">
    <property type="entry name" value="Cyt_P450_CS"/>
</dbReference>
<dbReference type="InterPro" id="IPR002401">
    <property type="entry name" value="Cyt_P450_E_grp-I"/>
</dbReference>
<dbReference type="InterPro" id="IPR036396">
    <property type="entry name" value="Cyt_P450_sf"/>
</dbReference>
<dbReference type="PANTHER" id="PTHR47955:SF8">
    <property type="entry name" value="CYTOCHROME P450 71D11-LIKE"/>
    <property type="match status" value="1"/>
</dbReference>
<dbReference type="PANTHER" id="PTHR47955">
    <property type="entry name" value="CYTOCHROME P450 FAMILY 71 PROTEIN"/>
    <property type="match status" value="1"/>
</dbReference>
<dbReference type="Pfam" id="PF00067">
    <property type="entry name" value="p450"/>
    <property type="match status" value="1"/>
</dbReference>
<dbReference type="PRINTS" id="PR00463">
    <property type="entry name" value="EP450I"/>
</dbReference>
<dbReference type="PRINTS" id="PR00385">
    <property type="entry name" value="P450"/>
</dbReference>
<dbReference type="SUPFAM" id="SSF48264">
    <property type="entry name" value="Cytochrome P450"/>
    <property type="match status" value="1"/>
</dbReference>
<dbReference type="PROSITE" id="PS00086">
    <property type="entry name" value="CYTOCHROME_P450"/>
    <property type="match status" value="1"/>
</dbReference>
<comment type="function">
    <text evidence="1">Monooxygenase involved in the biosynthesis of limonoids triterpene natural products such as azadirachtin, an antifeedant widely used as bioinsecticide, and possessing many medicinal applications including anti-tumoral, anti-malarial, anti-rheumatic, antibacterial, anti-inflammatory, anti-pyretic and diuretic effects (By similarity). Catalyzes the conversion of dihydroniloticin to the protolimonoid melianol (By similarity).</text>
</comment>
<comment type="catalytic activity">
    <reaction evidence="1">
        <text>dihydroniloticin + 2 reduced [NADPH--hemoprotein reductase] + 2 O2 = melianol + 2 oxidized [NADPH--hemoprotein reductase] + 3 H2O + 2 H(+)</text>
        <dbReference type="Rhea" id="RHEA:80283"/>
        <dbReference type="Rhea" id="RHEA-COMP:11964"/>
        <dbReference type="Rhea" id="RHEA-COMP:11965"/>
        <dbReference type="ChEBI" id="CHEBI:15377"/>
        <dbReference type="ChEBI" id="CHEBI:15378"/>
        <dbReference type="ChEBI" id="CHEBI:15379"/>
        <dbReference type="ChEBI" id="CHEBI:57618"/>
        <dbReference type="ChEBI" id="CHEBI:58210"/>
        <dbReference type="ChEBI" id="CHEBI:231450"/>
        <dbReference type="ChEBI" id="CHEBI:231451"/>
    </reaction>
    <physiologicalReaction direction="left-to-right" evidence="1">
        <dbReference type="Rhea" id="RHEA:80284"/>
    </physiologicalReaction>
</comment>
<comment type="cofactor">
    <cofactor evidence="2">
        <name>heme</name>
        <dbReference type="ChEBI" id="CHEBI:30413"/>
    </cofactor>
</comment>
<comment type="pathway">
    <text evidence="1">Secondary metabolite biosynthesis; terpenoid biosynthesis.</text>
</comment>
<comment type="subcellular location">
    <subcellularLocation>
        <location evidence="3">Membrane</location>
        <topology evidence="3">Single-pass membrane protein</topology>
    </subcellularLocation>
</comment>
<comment type="tissue specificity">
    <text evidence="4">Mainly expressed in fruits and leaves.</text>
</comment>
<comment type="similarity">
    <text evidence="7">Belongs to the cytochrome P450 family.</text>
</comment>
<reference evidence="9" key="1">
    <citation type="submission" date="2019-11" db="EMBL/GenBank/DDBJ databases">
        <title>Systematic dissection of limonoid biosynthesis in neem: identification and functional characterization of key enzymes involved in limonoid biosynthetic pathway.</title>
        <authorList>
            <person name="Pandreka A."/>
            <person name="Kumar A."/>
            <person name="Thulasiram H.V."/>
        </authorList>
    </citation>
    <scope>NUCLEOTIDE SEQUENCE [MRNA]</scope>
</reference>
<reference evidence="8" key="2">
    <citation type="journal article" date="2019" name="Proc. Natl. Acad. Sci. U.S.A.">
        <title>Identification of key enzymes responsible for protolimonoid biosynthesis in plants: Opening the door to azadirachtin production.</title>
        <authorList>
            <person name="Hodgson H."/>
            <person name="De La Pena R."/>
            <person name="Stephenson M.J."/>
            <person name="Thimmappa R."/>
            <person name="Vincent J.L."/>
            <person name="Sattely E.S."/>
            <person name="Osbourn A."/>
        </authorList>
    </citation>
    <scope>NUCLEOTIDE SEQUENCE [MRNA] OF 130-504</scope>
    <scope>TISSUE SPECIFICITY</scope>
</reference>
<organism>
    <name type="scientific">Azadirachta indica</name>
    <name type="common">Neem tree</name>
    <name type="synonym">Melia azadirachta</name>
    <dbReference type="NCBI Taxonomy" id="124943"/>
    <lineage>
        <taxon>Eukaryota</taxon>
        <taxon>Viridiplantae</taxon>
        <taxon>Streptophyta</taxon>
        <taxon>Embryophyta</taxon>
        <taxon>Tracheophyta</taxon>
        <taxon>Spermatophyta</taxon>
        <taxon>Magnoliopsida</taxon>
        <taxon>eudicotyledons</taxon>
        <taxon>Gunneridae</taxon>
        <taxon>Pentapetalae</taxon>
        <taxon>rosids</taxon>
        <taxon>malvids</taxon>
        <taxon>Sapindales</taxon>
        <taxon>Meliaceae</taxon>
        <taxon>Azadirachta</taxon>
    </lineage>
</organism>
<protein>
    <recommendedName>
        <fullName evidence="5">Melianol synthase CYP71BQ5</fullName>
        <ecNumber evidence="1">1.14.14.-</ecNumber>
    </recommendedName>
    <alternativeName>
        <fullName evidence="5">Cytochrome P450 family 71 subfamily BQ polypeptide 5</fullName>
        <shortName evidence="5">AiCYP71BQ5</shortName>
        <shortName evidence="6">AiCYP9</shortName>
    </alternativeName>
</protein>
<evidence type="ECO:0000250" key="1">
    <source>
        <dbReference type="UniProtKB" id="A0A5B8NEF2"/>
    </source>
</evidence>
<evidence type="ECO:0000250" key="2">
    <source>
        <dbReference type="UniProtKB" id="Q96242"/>
    </source>
</evidence>
<evidence type="ECO:0000255" key="3"/>
<evidence type="ECO:0000269" key="4">
    <source>
    </source>
</evidence>
<evidence type="ECO:0000303" key="5">
    <source>
    </source>
</evidence>
<evidence type="ECO:0000303" key="6">
    <source ref="1"/>
</evidence>
<evidence type="ECO:0000305" key="7"/>
<evidence type="ECO:0000312" key="8">
    <source>
        <dbReference type="EMBL" id="QDZ36315.1"/>
    </source>
</evidence>
<evidence type="ECO:0000312" key="9">
    <source>
        <dbReference type="EMBL" id="QNN89101.1"/>
    </source>
</evidence>
<sequence>MEFRLPSLPVFLSFLLFFLMLVRHWKRSKGQGKPPPGPKPLPILGNLHQLADGLPHYAVTKLCRKYGPVMKLKLGQLDAVVVSSPEAAKEVLKTNEIKFAQRPEVYAVEIMSYDHSSIVFSPYGDYWREMRKISVLELLSNRRVTSFRSIREDEVWNLVQFISENEGCIINLSERIFTMTNDIISRAAFGNKCDDQHNFTALLEEILQIGAGFAIADLYPSLTFLRPLTGMKPALERIHKKMDKILEEIVTEHQIKRKAAAKNNTEFEEEDLVDTLLNYAEANKNEFHLTTDQVKAVTLDIFSAGSETSATSMEWAMSELLKNPRVMKKAQEEVRQACKGKSKIREADIQNLEYLKLVIKETFRLHAPGPFTPREARETCEIGGYTIPAKAKILINLHAMGRDPTIWKDPECFQPERFEGSSIDFKGNHFELIPFGGGRRICPGISFATANIELGLAQMMYHFDFKLPNGKSLEDLDMDENFGMTCRRKENLQVIATTRIPFEK</sequence>
<name>C1BQ5_AZAIN</name>
<proteinExistence type="evidence at transcript level"/>
<gene>
    <name evidence="5" type="primary">CYP71BQ5</name>
    <name evidence="6" type="synonym">CYP9</name>
</gene>
<feature type="chain" id="PRO_5028799803" description="Melianol synthase CYP71BQ5">
    <location>
        <begin position="1"/>
        <end position="504"/>
    </location>
</feature>
<feature type="transmembrane region" description="Helical" evidence="3">
    <location>
        <begin position="2"/>
        <end position="22"/>
    </location>
</feature>
<feature type="binding site" description="axial binding residue" evidence="2">
    <location>
        <position position="442"/>
    </location>
    <ligand>
        <name>heme</name>
        <dbReference type="ChEBI" id="CHEBI:30413"/>
    </ligand>
    <ligandPart>
        <name>Fe</name>
        <dbReference type="ChEBI" id="CHEBI:18248"/>
    </ligandPart>
</feature>
<feature type="sequence conflict" description="In Ref. 2; QDZ36315." evidence="7" ref="2">
    <original>N</original>
    <variation>S</variation>
    <location>
        <position position="157"/>
    </location>
</feature>
<keyword id="KW-0349">Heme</keyword>
<keyword id="KW-0408">Iron</keyword>
<keyword id="KW-0472">Membrane</keyword>
<keyword id="KW-0479">Metal-binding</keyword>
<keyword id="KW-0503">Monooxygenase</keyword>
<keyword id="KW-0560">Oxidoreductase</keyword>
<keyword id="KW-0812">Transmembrane</keyword>
<keyword id="KW-1133">Transmembrane helix</keyword>